<feature type="chain" id="PRO_0000334966" description="Ribonuclease HII">
    <location>
        <begin position="1"/>
        <end position="233"/>
    </location>
</feature>
<feature type="domain" description="RNase H type-2" evidence="2">
    <location>
        <begin position="26"/>
        <end position="215"/>
    </location>
</feature>
<feature type="region of interest" description="Disordered" evidence="3">
    <location>
        <begin position="211"/>
        <end position="233"/>
    </location>
</feature>
<feature type="binding site" evidence="1">
    <location>
        <position position="32"/>
    </location>
    <ligand>
        <name>a divalent metal cation</name>
        <dbReference type="ChEBI" id="CHEBI:60240"/>
    </ligand>
</feature>
<feature type="binding site" evidence="1">
    <location>
        <position position="33"/>
    </location>
    <ligand>
        <name>a divalent metal cation</name>
        <dbReference type="ChEBI" id="CHEBI:60240"/>
    </ligand>
</feature>
<feature type="binding site" evidence="1">
    <location>
        <position position="124"/>
    </location>
    <ligand>
        <name>a divalent metal cation</name>
        <dbReference type="ChEBI" id="CHEBI:60240"/>
    </ligand>
</feature>
<sequence length="233" mass="24904">MGRKPVEALAMDMLHFEKQAYRQGFQLVAGIDEVGRGPLAGPVVAAAVVVPAGVRLPGVADSKKLSAGQRESCCEDILSCGCDVGIGRVEPSEIDRVNILQATFQAMIAAVAGLKTPPHCLLIDGPYELPLFIAQKGIPQGDAKSLSIAAASIVAKVHRDRLMCEYHLKYPVYGFDRNKGYGTARHLDALRRYGPCPIHRLSFGGVRASEGEGLETAAGRQSSEGKKGRRPRG</sequence>
<proteinExistence type="inferred from homology"/>
<organism>
    <name type="scientific">Syntrophobacter fumaroxidans (strain DSM 10017 / MPOB)</name>
    <dbReference type="NCBI Taxonomy" id="335543"/>
    <lineage>
        <taxon>Bacteria</taxon>
        <taxon>Pseudomonadati</taxon>
        <taxon>Thermodesulfobacteriota</taxon>
        <taxon>Syntrophobacteria</taxon>
        <taxon>Syntrophobacterales</taxon>
        <taxon>Syntrophobacteraceae</taxon>
        <taxon>Syntrophobacter</taxon>
    </lineage>
</organism>
<reference key="1">
    <citation type="submission" date="2006-10" db="EMBL/GenBank/DDBJ databases">
        <title>Complete sequence of Syntrophobacter fumaroxidans MPOB.</title>
        <authorList>
            <consortium name="US DOE Joint Genome Institute"/>
            <person name="Copeland A."/>
            <person name="Lucas S."/>
            <person name="Lapidus A."/>
            <person name="Barry K."/>
            <person name="Detter J.C."/>
            <person name="Glavina del Rio T."/>
            <person name="Hammon N."/>
            <person name="Israni S."/>
            <person name="Pitluck S."/>
            <person name="Goltsman E.G."/>
            <person name="Martinez M."/>
            <person name="Schmutz J."/>
            <person name="Larimer F."/>
            <person name="Land M."/>
            <person name="Hauser L."/>
            <person name="Kyrpides N."/>
            <person name="Kim E."/>
            <person name="Boone D.R."/>
            <person name="Brockman F."/>
            <person name="Culley D."/>
            <person name="Ferry J."/>
            <person name="Gunsalus R."/>
            <person name="McInerney M.J."/>
            <person name="Morrison M."/>
            <person name="Plugge C."/>
            <person name="Rohlin L."/>
            <person name="Scholten J."/>
            <person name="Sieber J."/>
            <person name="Stams A.J.M."/>
            <person name="Worm P."/>
            <person name="Henstra A.M."/>
            <person name="Richardson P."/>
        </authorList>
    </citation>
    <scope>NUCLEOTIDE SEQUENCE [LARGE SCALE GENOMIC DNA]</scope>
    <source>
        <strain>DSM 10017 / MPOB</strain>
    </source>
</reference>
<keyword id="KW-0963">Cytoplasm</keyword>
<keyword id="KW-0255">Endonuclease</keyword>
<keyword id="KW-0378">Hydrolase</keyword>
<keyword id="KW-0464">Manganese</keyword>
<keyword id="KW-0479">Metal-binding</keyword>
<keyword id="KW-0540">Nuclease</keyword>
<keyword id="KW-1185">Reference proteome</keyword>
<name>RNH2_SYNFM</name>
<evidence type="ECO:0000255" key="1">
    <source>
        <dbReference type="HAMAP-Rule" id="MF_00052"/>
    </source>
</evidence>
<evidence type="ECO:0000255" key="2">
    <source>
        <dbReference type="PROSITE-ProRule" id="PRU01319"/>
    </source>
</evidence>
<evidence type="ECO:0000256" key="3">
    <source>
        <dbReference type="SAM" id="MobiDB-lite"/>
    </source>
</evidence>
<dbReference type="EC" id="3.1.26.4" evidence="1"/>
<dbReference type="EMBL" id="CP000478">
    <property type="protein sequence ID" value="ABK18677.1"/>
    <property type="molecule type" value="Genomic_DNA"/>
</dbReference>
<dbReference type="EMBL" id="CP000478">
    <property type="protein sequence ID" value="ABK18719.1"/>
    <property type="molecule type" value="Genomic_DNA"/>
</dbReference>
<dbReference type="RefSeq" id="WP_011699841.1">
    <property type="nucleotide sequence ID" value="NC_008554.1"/>
</dbReference>
<dbReference type="SMR" id="A0LMM5"/>
<dbReference type="FunCoup" id="A0LMM5">
    <property type="interactions" value="318"/>
</dbReference>
<dbReference type="STRING" id="335543.Sfum_3003"/>
<dbReference type="KEGG" id="sfu:Sfum_3003"/>
<dbReference type="KEGG" id="sfu:Sfum_3045"/>
<dbReference type="eggNOG" id="COG0164">
    <property type="taxonomic scope" value="Bacteria"/>
</dbReference>
<dbReference type="HOGENOM" id="CLU_036532_3_2_7"/>
<dbReference type="InParanoid" id="A0LMM5"/>
<dbReference type="OrthoDB" id="9803420at2"/>
<dbReference type="Proteomes" id="UP000001784">
    <property type="component" value="Chromosome"/>
</dbReference>
<dbReference type="GO" id="GO:0005737">
    <property type="term" value="C:cytoplasm"/>
    <property type="evidence" value="ECO:0007669"/>
    <property type="project" value="UniProtKB-SubCell"/>
</dbReference>
<dbReference type="GO" id="GO:0032299">
    <property type="term" value="C:ribonuclease H2 complex"/>
    <property type="evidence" value="ECO:0007669"/>
    <property type="project" value="TreeGrafter"/>
</dbReference>
<dbReference type="GO" id="GO:0030145">
    <property type="term" value="F:manganese ion binding"/>
    <property type="evidence" value="ECO:0007669"/>
    <property type="project" value="UniProtKB-UniRule"/>
</dbReference>
<dbReference type="GO" id="GO:0003723">
    <property type="term" value="F:RNA binding"/>
    <property type="evidence" value="ECO:0007669"/>
    <property type="project" value="InterPro"/>
</dbReference>
<dbReference type="GO" id="GO:0004523">
    <property type="term" value="F:RNA-DNA hybrid ribonuclease activity"/>
    <property type="evidence" value="ECO:0007669"/>
    <property type="project" value="UniProtKB-UniRule"/>
</dbReference>
<dbReference type="GO" id="GO:0043137">
    <property type="term" value="P:DNA replication, removal of RNA primer"/>
    <property type="evidence" value="ECO:0007669"/>
    <property type="project" value="TreeGrafter"/>
</dbReference>
<dbReference type="GO" id="GO:0006298">
    <property type="term" value="P:mismatch repair"/>
    <property type="evidence" value="ECO:0007669"/>
    <property type="project" value="TreeGrafter"/>
</dbReference>
<dbReference type="CDD" id="cd07182">
    <property type="entry name" value="RNase_HII_bacteria_HII_like"/>
    <property type="match status" value="1"/>
</dbReference>
<dbReference type="Gene3D" id="3.30.420.10">
    <property type="entry name" value="Ribonuclease H-like superfamily/Ribonuclease H"/>
    <property type="match status" value="1"/>
</dbReference>
<dbReference type="HAMAP" id="MF_00052_B">
    <property type="entry name" value="RNase_HII_B"/>
    <property type="match status" value="1"/>
</dbReference>
<dbReference type="InterPro" id="IPR022898">
    <property type="entry name" value="RNase_HII"/>
</dbReference>
<dbReference type="InterPro" id="IPR001352">
    <property type="entry name" value="RNase_HII/HIII"/>
</dbReference>
<dbReference type="InterPro" id="IPR024567">
    <property type="entry name" value="RNase_HII/HIII_dom"/>
</dbReference>
<dbReference type="InterPro" id="IPR012337">
    <property type="entry name" value="RNaseH-like_sf"/>
</dbReference>
<dbReference type="InterPro" id="IPR036397">
    <property type="entry name" value="RNaseH_sf"/>
</dbReference>
<dbReference type="NCBIfam" id="NF000594">
    <property type="entry name" value="PRK00015.1-1"/>
    <property type="match status" value="1"/>
</dbReference>
<dbReference type="NCBIfam" id="NF000595">
    <property type="entry name" value="PRK00015.1-3"/>
    <property type="match status" value="1"/>
</dbReference>
<dbReference type="PANTHER" id="PTHR10954">
    <property type="entry name" value="RIBONUCLEASE H2 SUBUNIT A"/>
    <property type="match status" value="1"/>
</dbReference>
<dbReference type="PANTHER" id="PTHR10954:SF18">
    <property type="entry name" value="RIBONUCLEASE HII"/>
    <property type="match status" value="1"/>
</dbReference>
<dbReference type="Pfam" id="PF01351">
    <property type="entry name" value="RNase_HII"/>
    <property type="match status" value="1"/>
</dbReference>
<dbReference type="SUPFAM" id="SSF53098">
    <property type="entry name" value="Ribonuclease H-like"/>
    <property type="match status" value="1"/>
</dbReference>
<dbReference type="PROSITE" id="PS51975">
    <property type="entry name" value="RNASE_H_2"/>
    <property type="match status" value="1"/>
</dbReference>
<comment type="function">
    <text evidence="1">Endonuclease that specifically degrades the RNA of RNA-DNA hybrids.</text>
</comment>
<comment type="catalytic activity">
    <reaction evidence="1">
        <text>Endonucleolytic cleavage to 5'-phosphomonoester.</text>
        <dbReference type="EC" id="3.1.26.4"/>
    </reaction>
</comment>
<comment type="cofactor">
    <cofactor evidence="1">
        <name>Mn(2+)</name>
        <dbReference type="ChEBI" id="CHEBI:29035"/>
    </cofactor>
    <cofactor evidence="1">
        <name>Mg(2+)</name>
        <dbReference type="ChEBI" id="CHEBI:18420"/>
    </cofactor>
    <text evidence="1">Manganese or magnesium. Binds 1 divalent metal ion per monomer in the absence of substrate. May bind a second metal ion after substrate binding.</text>
</comment>
<comment type="subcellular location">
    <subcellularLocation>
        <location evidence="1">Cytoplasm</location>
    </subcellularLocation>
</comment>
<comment type="similarity">
    <text evidence="1">Belongs to the RNase HII family.</text>
</comment>
<gene>
    <name evidence="1" type="primary">rnhB1</name>
    <name type="ordered locus">Sfum_3003</name>
</gene>
<gene>
    <name evidence="1" type="primary">rnhB2</name>
    <name type="ordered locus">Sfum_3045</name>
</gene>
<protein>
    <recommendedName>
        <fullName evidence="1">Ribonuclease HII</fullName>
        <shortName evidence="1">RNase HII</shortName>
        <ecNumber evidence="1">3.1.26.4</ecNumber>
    </recommendedName>
</protein>
<accession>A0LMM5</accession>